<sequence>MNRPLSAEAEEELEWQVASRRRKAWAKCRSSWQASETEDLSTETTTQDEDEDDEEDLPGTKLPAPAGRGNVPNEKIAIWLKDCRTPLGASLDEQSSGTPKGVLVRNGGSFEDDLSLGAEANHLHEPDAQVENCNNILAKERRLQFHQKGRSMNSTGSGKSSGTVSSVSELLELYEEDPEEILYNLGFGRDEPDIASKIPSRFFNSSSFARGIDIKVFLSAQMQRMEVENPNYALTSRFRQIEVLTTVANAFSSLYSQVSGTPLQRIGSMSSVTSTKEVADSPPPLTRSNTANRLMKTLSKLNLCVDKTEKGEGGSSPATEKGRTLSISLSEDGGGGKSDPKLQKVVKKKESSSMLATVTEEVSGSSSTVTDSVDADRLSEEADSTISHQEESEESREAHSQEKDPLRKSAVTDPDLGHDGRVSSHCELESSSELKSAQASSSEKEPCAPLTIPSIRNIMTQQKDSFEMEEVQSTEGEAPHVPATCQLSLAKSKRDHLLRTASQHSDSSGFAEDSTDCVSLNHLLVNESLQAMGSSADSCDSETTVTSLGEDHVTPTAQDQPYFNESEEESLAPLQKGRAKVEIVAEKRKADNQDFPQCVTAENAGNNESTKGPCEPGHQITETGEHPPLAATGELPREESVESDVEKGSECEFAQYTTHHILRSLASFEAQGSGMSSEKKTGFPSSVDRVNTALQRAQMKVCSMSGQRVGRSLIKSKDLLKQRYLLAKAGYPLRRSQSLPTTLLSPVRVVSSVNVRLSPGKETRCSPPSFTYKYTPEEEQDLEKQGTEHDGQSLVKSTIFIPPPSVKKEEAPQSEGTRLEECHHGRLAPCPQFAPISQSTCSLHSVHSEWQDRPLCEHMRTLSAHSVPNISGAACSAFSPFGCPYSHRHAAHPYRACSVNPPSAIEMQLRRVLHDIRSSLQNLSQYPMTRGPDLAAAPYSTQNSSVLPLYENTFQELQVVRRSLNLFRTQMMDLELAMLRQQTVVYPHMTEEDRYEVDQLQGLRNSVRMELQDLEMQLEERLLGLDEQLRAVRVPSPFRPSALPGMCGSRSVDNLSCPSPLNVMEPVTELIREQSYLKSELGLGLGDMAYEIPPGESSESVFSQATSESSSVCSSPSHTNRRSRGLPGSKPRARLVARKKIFRASVALTPTAPSRTGSVQTPPDLESSEEAGGAEEASPVVGLASHVEEEPEDLSLMPAAEEMHRNVEQDELQQVIREIKESIVGEIRREIVSGLLAAVSSSKAPGPKQDSH</sequence>
<organism>
    <name type="scientific">Mus musculus</name>
    <name type="common">Mouse</name>
    <dbReference type="NCBI Taxonomy" id="10090"/>
    <lineage>
        <taxon>Eukaryota</taxon>
        <taxon>Metazoa</taxon>
        <taxon>Chordata</taxon>
        <taxon>Craniata</taxon>
        <taxon>Vertebrata</taxon>
        <taxon>Euteleostomi</taxon>
        <taxon>Mammalia</taxon>
        <taxon>Eutheria</taxon>
        <taxon>Euarchontoglires</taxon>
        <taxon>Glires</taxon>
        <taxon>Rodentia</taxon>
        <taxon>Myomorpha</taxon>
        <taxon>Muroidea</taxon>
        <taxon>Muridae</taxon>
        <taxon>Murinae</taxon>
        <taxon>Mus</taxon>
        <taxon>Mus</taxon>
    </lineage>
</organism>
<gene>
    <name type="primary">Itprid2</name>
    <name type="synonym">Kiaa1927</name>
    <name evidence="6" type="synonym">Krap</name>
    <name evidence="10" type="synonym">Ssfa2</name>
</gene>
<keyword id="KW-0025">Alternative splicing</keyword>
<keyword id="KW-0175">Coiled coil</keyword>
<keyword id="KW-0963">Cytoplasm</keyword>
<keyword id="KW-1017">Isopeptide bond</keyword>
<keyword id="KW-0597">Phosphoprotein</keyword>
<keyword id="KW-1185">Reference proteome</keyword>
<keyword id="KW-0832">Ubl conjugation</keyword>
<dbReference type="EMBL" id="AB120565">
    <property type="protein sequence ID" value="BAC87833.1"/>
    <property type="molecule type" value="mRNA"/>
</dbReference>
<dbReference type="EMBL" id="AL844577">
    <property type="status" value="NOT_ANNOTATED_CDS"/>
    <property type="molecule type" value="Genomic_DNA"/>
</dbReference>
<dbReference type="EMBL" id="AL928770">
    <property type="status" value="NOT_ANNOTATED_CDS"/>
    <property type="molecule type" value="Genomic_DNA"/>
</dbReference>
<dbReference type="EMBL" id="BC008560">
    <property type="protein sequence ID" value="AAH08560.1"/>
    <property type="status" value="ALT_INIT"/>
    <property type="molecule type" value="mRNA"/>
</dbReference>
<dbReference type="EMBL" id="BC018526">
    <property type="protein sequence ID" value="AAH18526.3"/>
    <property type="status" value="ALT_TERM"/>
    <property type="molecule type" value="mRNA"/>
</dbReference>
<dbReference type="EMBL" id="BC079535">
    <property type="protein sequence ID" value="AAH79535.1"/>
    <property type="molecule type" value="mRNA"/>
</dbReference>
<dbReference type="EMBL" id="BC115799">
    <property type="protein sequence ID" value="AAI15800.1"/>
    <property type="molecule type" value="mRNA"/>
</dbReference>
<dbReference type="EMBL" id="BC122519">
    <property type="protein sequence ID" value="AAI22520.1"/>
    <property type="status" value="ALT_INIT"/>
    <property type="molecule type" value="mRNA"/>
</dbReference>
<dbReference type="EMBL" id="BC141883">
    <property type="protein sequence ID" value="AAI41884.1"/>
    <property type="molecule type" value="mRNA"/>
</dbReference>
<dbReference type="EMBL" id="AK037213">
    <property type="protein sequence ID" value="BAC29756.1"/>
    <property type="status" value="ALT_INIT"/>
    <property type="molecule type" value="mRNA"/>
</dbReference>
<dbReference type="EMBL" id="AB093303">
    <property type="protein sequence ID" value="BAC41485.1"/>
    <property type="molecule type" value="mRNA"/>
</dbReference>
<dbReference type="CCDS" id="CCDS16170.1">
    <molecule id="Q922B9-1"/>
</dbReference>
<dbReference type="RefSeq" id="NP_542125.3">
    <molecule id="Q922B9-1"/>
    <property type="nucleotide sequence ID" value="NM_080558.4"/>
</dbReference>
<dbReference type="RefSeq" id="XP_036018457.1">
    <molecule id="Q922B9-1"/>
    <property type="nucleotide sequence ID" value="XM_036162564.1"/>
</dbReference>
<dbReference type="SMR" id="Q922B9"/>
<dbReference type="FunCoup" id="Q922B9">
    <property type="interactions" value="1745"/>
</dbReference>
<dbReference type="STRING" id="10090.ENSMUSP00000107415"/>
<dbReference type="iPTMnet" id="Q922B9"/>
<dbReference type="PhosphoSitePlus" id="Q922B9"/>
<dbReference type="SwissPalm" id="Q922B9"/>
<dbReference type="jPOST" id="Q922B9"/>
<dbReference type="PaxDb" id="10090-ENSMUSP00000107415"/>
<dbReference type="PeptideAtlas" id="Q922B9"/>
<dbReference type="ProteomicsDB" id="258624">
    <molecule id="Q922B9-1"/>
</dbReference>
<dbReference type="ProteomicsDB" id="258625">
    <molecule id="Q922B9-2"/>
</dbReference>
<dbReference type="ProteomicsDB" id="258626">
    <molecule id="Q922B9-3"/>
</dbReference>
<dbReference type="Pumba" id="Q922B9"/>
<dbReference type="Antibodypedia" id="33982">
    <property type="antibodies" value="107 antibodies from 19 providers"/>
</dbReference>
<dbReference type="DNASU" id="70599"/>
<dbReference type="Ensembl" id="ENSMUST00000111785.9">
    <molecule id="Q922B9-1"/>
    <property type="protein sequence ID" value="ENSMUSP00000107415.3"/>
    <property type="gene ID" value="ENSMUSG00000027007.17"/>
</dbReference>
<dbReference type="GeneID" id="70599"/>
<dbReference type="KEGG" id="mmu:70599"/>
<dbReference type="UCSC" id="uc008kgw.2">
    <molecule id="Q922B9-1"/>
    <property type="organism name" value="mouse"/>
</dbReference>
<dbReference type="AGR" id="MGI:1917849"/>
<dbReference type="CTD" id="6744"/>
<dbReference type="MGI" id="MGI:1917849">
    <property type="gene designation" value="Itprid2"/>
</dbReference>
<dbReference type="VEuPathDB" id="HostDB:ENSMUSG00000027007"/>
<dbReference type="eggNOG" id="ENOG502QSG8">
    <property type="taxonomic scope" value="Eukaryota"/>
</dbReference>
<dbReference type="GeneTree" id="ENSGT00940000158532"/>
<dbReference type="HOGENOM" id="CLU_007016_0_0_1"/>
<dbReference type="InParanoid" id="Q922B9"/>
<dbReference type="OMA" id="PGTPPMH"/>
<dbReference type="OrthoDB" id="6088188at2759"/>
<dbReference type="TreeFam" id="TF331566"/>
<dbReference type="BioGRID-ORCS" id="70599">
    <property type="hits" value="2 hits in 75 CRISPR screens"/>
</dbReference>
<dbReference type="ChiTaRS" id="Ssfa2">
    <property type="organism name" value="mouse"/>
</dbReference>
<dbReference type="PRO" id="PR:Q922B9"/>
<dbReference type="Proteomes" id="UP000000589">
    <property type="component" value="Chromosome 2"/>
</dbReference>
<dbReference type="RNAct" id="Q922B9">
    <property type="molecule type" value="protein"/>
</dbReference>
<dbReference type="Bgee" id="ENSMUSG00000027007">
    <property type="expression patterns" value="Expressed in skin of external ear and 236 other cell types or tissues"/>
</dbReference>
<dbReference type="ExpressionAtlas" id="Q922B9">
    <property type="expression patterns" value="baseline and differential"/>
</dbReference>
<dbReference type="GO" id="GO:0005829">
    <property type="term" value="C:cytosol"/>
    <property type="evidence" value="ECO:0007669"/>
    <property type="project" value="Ensembl"/>
</dbReference>
<dbReference type="GO" id="GO:0005654">
    <property type="term" value="C:nucleoplasm"/>
    <property type="evidence" value="ECO:0007669"/>
    <property type="project" value="Ensembl"/>
</dbReference>
<dbReference type="GO" id="GO:0005886">
    <property type="term" value="C:plasma membrane"/>
    <property type="evidence" value="ECO:0007669"/>
    <property type="project" value="Ensembl"/>
</dbReference>
<dbReference type="GO" id="GO:0051015">
    <property type="term" value="F:actin filament binding"/>
    <property type="evidence" value="ECO:0007669"/>
    <property type="project" value="Ensembl"/>
</dbReference>
<dbReference type="GO" id="GO:0005102">
    <property type="term" value="F:signaling receptor binding"/>
    <property type="evidence" value="ECO:0007669"/>
    <property type="project" value="InterPro"/>
</dbReference>
<dbReference type="InterPro" id="IPR029325">
    <property type="entry name" value="ITPR-bd"/>
</dbReference>
<dbReference type="InterPro" id="IPR029326">
    <property type="entry name" value="SSFA2_C"/>
</dbReference>
<dbReference type="InterPro" id="IPR043444">
    <property type="entry name" value="TESPA1-like"/>
</dbReference>
<dbReference type="PANTHER" id="PTHR17469:SF11">
    <property type="entry name" value="PROTEIN ITPRID2"/>
    <property type="match status" value="1"/>
</dbReference>
<dbReference type="PANTHER" id="PTHR17469">
    <property type="entry name" value="SPERM SPECIFIC ANTIGEN 2-RELATED"/>
    <property type="match status" value="1"/>
</dbReference>
<dbReference type="Pfam" id="PF14722">
    <property type="entry name" value="KRAP_IP3R_bind"/>
    <property type="match status" value="1"/>
</dbReference>
<dbReference type="Pfam" id="PF14723">
    <property type="entry name" value="SSFA2_C"/>
    <property type="match status" value="1"/>
</dbReference>
<dbReference type="SMART" id="SM01257">
    <property type="entry name" value="KRAP_IP3R_bind"/>
    <property type="match status" value="1"/>
</dbReference>
<protein>
    <recommendedName>
        <fullName evidence="9">Protein ITPRID2</fullName>
    </recommendedName>
    <alternativeName>
        <fullName evidence="9">ITPR-interacting domain-containing protein 2</fullName>
    </alternativeName>
    <alternativeName>
        <fullName evidence="6">Ki-ras-induced actin-interacting protein</fullName>
    </alternativeName>
    <alternativeName>
        <fullName evidence="2">Sperm-specific antigen 2 homolog</fullName>
    </alternativeName>
</protein>
<proteinExistence type="evidence at protein level"/>
<accession>Q922B9</accession>
<accession>A2AQD4</accession>
<accession>A5D8Z6</accession>
<accession>Q08E80</accession>
<accession>Q14BJ9</accession>
<accession>Q544I3</accession>
<accession>Q68FN1</accession>
<accession>Q75WU7</accession>
<accession>Q8CH96</accession>
<accession>Q8VEF7</accession>
<name>ITPI2_MOUSE</name>
<comment type="subcellular location">
    <subcellularLocation>
        <location evidence="5">Cytoplasm</location>
    </subcellularLocation>
    <text evidence="1">Located near the plasma membrane. Associated with actin filaments. May also exist as a membrane-bound form with extracellular regions (By similarity).</text>
</comment>
<comment type="alternative products">
    <event type="alternative splicing"/>
    <isoform>
        <id>Q922B9-1</id>
        <name>1</name>
        <sequence type="displayed"/>
    </isoform>
    <isoform>
        <id>Q922B9-2</id>
        <name>2</name>
        <sequence type="described" ref="VSP_023869"/>
    </isoform>
    <isoform>
        <id>Q922B9-3</id>
        <name>3</name>
        <sequence type="described" ref="VSP_023868"/>
    </isoform>
</comment>
<comment type="sequence caution" evidence="9">
    <conflict type="erroneous initiation">
        <sequence resource="EMBL-CDS" id="AAH08560"/>
    </conflict>
    <text>Truncated N-terminus.</text>
</comment>
<comment type="sequence caution" evidence="9">
    <conflict type="erroneous termination">
        <sequence resource="EMBL-CDS" id="AAH18526"/>
    </conflict>
    <text>Truncated C-terminus.</text>
</comment>
<comment type="sequence caution" evidence="9">
    <conflict type="erroneous initiation">
        <sequence resource="EMBL-CDS" id="AAI22520"/>
    </conflict>
    <text>Extended N-terminus.</text>
</comment>
<comment type="sequence caution" evidence="9">
    <conflict type="erroneous initiation">
        <sequence resource="EMBL-CDS" id="BAC29756"/>
    </conflict>
    <text>Extended N-terminus.</text>
</comment>
<feature type="chain" id="PRO_0000072212" description="Protein ITPRID2">
    <location>
        <begin position="1"/>
        <end position="1252"/>
    </location>
</feature>
<feature type="region of interest" description="Disordered" evidence="4">
    <location>
        <begin position="28"/>
        <end position="70"/>
    </location>
</feature>
<feature type="region of interest" description="Disordered" evidence="4">
    <location>
        <begin position="306"/>
        <end position="483"/>
    </location>
</feature>
<feature type="region of interest" description="Disordered" evidence="4">
    <location>
        <begin position="552"/>
        <end position="575"/>
    </location>
</feature>
<feature type="region of interest" description="Disordered" evidence="4">
    <location>
        <begin position="595"/>
        <end position="636"/>
    </location>
</feature>
<feature type="region of interest" description="Disordered" evidence="4">
    <location>
        <begin position="1095"/>
        <end position="1131"/>
    </location>
</feature>
<feature type="region of interest" description="Disordered" evidence="4">
    <location>
        <begin position="1147"/>
        <end position="1180"/>
    </location>
</feature>
<feature type="coiled-coil region" evidence="3">
    <location>
        <begin position="955"/>
        <end position="1031"/>
    </location>
</feature>
<feature type="compositionally biased region" description="Acidic residues" evidence="4">
    <location>
        <begin position="36"/>
        <end position="57"/>
    </location>
</feature>
<feature type="compositionally biased region" description="Low complexity" evidence="4">
    <location>
        <begin position="357"/>
        <end position="372"/>
    </location>
</feature>
<feature type="compositionally biased region" description="Basic and acidic residues" evidence="4">
    <location>
        <begin position="395"/>
        <end position="407"/>
    </location>
</feature>
<feature type="compositionally biased region" description="Basic and acidic residues" evidence="4">
    <location>
        <begin position="415"/>
        <end position="428"/>
    </location>
</feature>
<feature type="compositionally biased region" description="Low complexity" evidence="4">
    <location>
        <begin position="429"/>
        <end position="441"/>
    </location>
</feature>
<feature type="compositionally biased region" description="Low complexity" evidence="4">
    <location>
        <begin position="1103"/>
        <end position="1117"/>
    </location>
</feature>
<feature type="compositionally biased region" description="Polar residues" evidence="4">
    <location>
        <begin position="1151"/>
        <end position="1161"/>
    </location>
</feature>
<feature type="modified residue" description="Phosphothreonine" evidence="11">
    <location>
        <position position="85"/>
    </location>
</feature>
<feature type="modified residue" description="Phosphoserine" evidence="11 12 13">
    <location>
        <position position="90"/>
    </location>
</feature>
<feature type="modified residue" description="Phosphoserine" evidence="13">
    <location>
        <position position="109"/>
    </location>
</feature>
<feature type="modified residue" description="Phosphoserine" evidence="2">
    <location>
        <position position="207"/>
    </location>
</feature>
<feature type="modified residue" description="Phosphoserine" evidence="13">
    <location>
        <position position="268"/>
    </location>
</feature>
<feature type="modified residue" description="Phosphoserine" evidence="2">
    <location>
        <position position="328"/>
    </location>
</feature>
<feature type="modified residue" description="Phosphoserine" evidence="13">
    <location>
        <position position="465"/>
    </location>
</feature>
<feature type="modified residue" description="Phosphoserine" evidence="2">
    <location>
        <position position="643"/>
    </location>
</feature>
<feature type="modified residue" description="Phosphoserine" evidence="13">
    <location>
        <position position="667"/>
    </location>
</feature>
<feature type="modified residue" description="Phosphoserine" evidence="11 13">
    <location>
        <position position="736"/>
    </location>
</feature>
<feature type="modified residue" description="Phosphoserine" evidence="11 13">
    <location>
        <position position="738"/>
    </location>
</feature>
<feature type="modified residue" description="Phosphoserine" evidence="13">
    <location>
        <position position="745"/>
    </location>
</feature>
<feature type="modified residue" description="Phosphoserine" evidence="2">
    <location>
        <position position="758"/>
    </location>
</feature>
<feature type="modified residue" description="Phosphoserine" evidence="2">
    <location>
        <position position="766"/>
    </location>
</feature>
<feature type="modified residue" description="Phosphoserine" evidence="13">
    <location>
        <position position="866"/>
    </location>
</feature>
<feature type="modified residue" description="Phosphoserine" evidence="2">
    <location>
        <position position="898"/>
    </location>
</feature>
<feature type="modified residue" description="Phosphoserine" evidence="13">
    <location>
        <position position="1036"/>
    </location>
</feature>
<feature type="modified residue" description="Phosphoserine" evidence="13">
    <location>
        <position position="1051"/>
    </location>
</feature>
<feature type="modified residue" description="Phosphoserine" evidence="13">
    <location>
        <position position="1056"/>
    </location>
</feature>
<feature type="modified residue" description="Phosphoserine" evidence="13">
    <location>
        <position position="1059"/>
    </location>
</feature>
<feature type="modified residue" description="Phosphoserine" evidence="2">
    <location>
        <position position="1114"/>
    </location>
</feature>
<feature type="modified residue" description="Phosphothreonine" evidence="2">
    <location>
        <position position="1149"/>
    </location>
</feature>
<feature type="modified residue" description="Phosphoserine" evidence="13">
    <location>
        <position position="1154"/>
    </location>
</feature>
<feature type="modified residue" description="Phosphothreonine" evidence="2">
    <location>
        <position position="1161"/>
    </location>
</feature>
<feature type="cross-link" description="Glycyl lysine isopeptide (Lys-Gly) (interchain with G-Cter in SUMO2)" evidence="2">
    <location>
        <position position="807"/>
    </location>
</feature>
<feature type="splice variant" id="VSP_023869" description="In isoform 2." evidence="7">
    <location>
        <begin position="1"/>
        <end position="1063"/>
    </location>
</feature>
<feature type="splice variant" id="VSP_023868" description="In isoform 3." evidence="8">
    <location>
        <begin position="1"/>
        <end position="151"/>
    </location>
</feature>
<feature type="sequence conflict" description="In Ref. 1; BAC87833, 3; AAI22520/AAI41884 and 5; BAC41485." evidence="9" ref="1 3 5">
    <original>T</original>
    <variation>A</variation>
    <location>
        <position position="319"/>
    </location>
</feature>
<feature type="sequence conflict" description="In Ref. 1; BAC87833, 3; AAH18526/AAI41884/AAI22520 and 5; BAC41485." evidence="9" ref="1 3 5">
    <original>I</original>
    <variation>M</variation>
    <location>
        <position position="1071"/>
    </location>
</feature>
<feature type="sequence conflict" description="In Ref. 1; BAC87833." evidence="9" ref="1">
    <original>S</original>
    <variation>A</variation>
    <location>
        <position position="1240"/>
    </location>
</feature>
<reference key="1">
    <citation type="journal article" date="2004" name="J. Hum. Genet.">
        <title>Deregulated expression of KRAP, a novel gene encoding actin-interacting protein, in human colon cancer cells.</title>
        <authorList>
            <person name="Inokuchi J."/>
            <person name="Komiya M."/>
            <person name="Baba I."/>
            <person name="Naito S."/>
            <person name="Sasazuki T."/>
            <person name="Shirasawa S."/>
        </authorList>
    </citation>
    <scope>NUCLEOTIDE SEQUENCE [MRNA] (ISOFORM 1)</scope>
    <scope>SUBCELLULAR LOCATION</scope>
</reference>
<reference key="2">
    <citation type="journal article" date="2009" name="PLoS Biol.">
        <title>Lineage-specific biology revealed by a finished genome assembly of the mouse.</title>
        <authorList>
            <person name="Church D.M."/>
            <person name="Goodstadt L."/>
            <person name="Hillier L.W."/>
            <person name="Zody M.C."/>
            <person name="Goldstein S."/>
            <person name="She X."/>
            <person name="Bult C.J."/>
            <person name="Agarwala R."/>
            <person name="Cherry J.L."/>
            <person name="DiCuccio M."/>
            <person name="Hlavina W."/>
            <person name="Kapustin Y."/>
            <person name="Meric P."/>
            <person name="Maglott D."/>
            <person name="Birtle Z."/>
            <person name="Marques A.C."/>
            <person name="Graves T."/>
            <person name="Zhou S."/>
            <person name="Teague B."/>
            <person name="Potamousis K."/>
            <person name="Churas C."/>
            <person name="Place M."/>
            <person name="Herschleb J."/>
            <person name="Runnheim R."/>
            <person name="Forrest D."/>
            <person name="Amos-Landgraf J."/>
            <person name="Schwartz D.C."/>
            <person name="Cheng Z."/>
            <person name="Lindblad-Toh K."/>
            <person name="Eichler E.E."/>
            <person name="Ponting C.P."/>
        </authorList>
    </citation>
    <scope>NUCLEOTIDE SEQUENCE [LARGE SCALE GENOMIC DNA]</scope>
    <source>
        <strain>C57BL/6J</strain>
    </source>
</reference>
<reference key="3">
    <citation type="journal article" date="2004" name="Genome Res.">
        <title>The status, quality, and expansion of the NIH full-length cDNA project: the Mammalian Gene Collection (MGC).</title>
        <authorList>
            <consortium name="The MGC Project Team"/>
        </authorList>
    </citation>
    <scope>NUCLEOTIDE SEQUENCE [LARGE SCALE MRNA] (ISOFORMS 1 AND 2)</scope>
    <source>
        <strain>C57BL/6J</strain>
        <tissue>Brain</tissue>
    </source>
</reference>
<reference key="4">
    <citation type="journal article" date="2005" name="Science">
        <title>The transcriptional landscape of the mammalian genome.</title>
        <authorList>
            <person name="Carninci P."/>
            <person name="Kasukawa T."/>
            <person name="Katayama S."/>
            <person name="Gough J."/>
            <person name="Frith M.C."/>
            <person name="Maeda N."/>
            <person name="Oyama R."/>
            <person name="Ravasi T."/>
            <person name="Lenhard B."/>
            <person name="Wells C."/>
            <person name="Kodzius R."/>
            <person name="Shimokawa K."/>
            <person name="Bajic V.B."/>
            <person name="Brenner S.E."/>
            <person name="Batalov S."/>
            <person name="Forrest A.R."/>
            <person name="Zavolan M."/>
            <person name="Davis M.J."/>
            <person name="Wilming L.G."/>
            <person name="Aidinis V."/>
            <person name="Allen J.E."/>
            <person name="Ambesi-Impiombato A."/>
            <person name="Apweiler R."/>
            <person name="Aturaliya R.N."/>
            <person name="Bailey T.L."/>
            <person name="Bansal M."/>
            <person name="Baxter L."/>
            <person name="Beisel K.W."/>
            <person name="Bersano T."/>
            <person name="Bono H."/>
            <person name="Chalk A.M."/>
            <person name="Chiu K.P."/>
            <person name="Choudhary V."/>
            <person name="Christoffels A."/>
            <person name="Clutterbuck D.R."/>
            <person name="Crowe M.L."/>
            <person name="Dalla E."/>
            <person name="Dalrymple B.P."/>
            <person name="de Bono B."/>
            <person name="Della Gatta G."/>
            <person name="di Bernardo D."/>
            <person name="Down T."/>
            <person name="Engstrom P."/>
            <person name="Fagiolini M."/>
            <person name="Faulkner G."/>
            <person name="Fletcher C.F."/>
            <person name="Fukushima T."/>
            <person name="Furuno M."/>
            <person name="Futaki S."/>
            <person name="Gariboldi M."/>
            <person name="Georgii-Hemming P."/>
            <person name="Gingeras T.R."/>
            <person name="Gojobori T."/>
            <person name="Green R.E."/>
            <person name="Gustincich S."/>
            <person name="Harbers M."/>
            <person name="Hayashi Y."/>
            <person name="Hensch T.K."/>
            <person name="Hirokawa N."/>
            <person name="Hill D."/>
            <person name="Huminiecki L."/>
            <person name="Iacono M."/>
            <person name="Ikeo K."/>
            <person name="Iwama A."/>
            <person name="Ishikawa T."/>
            <person name="Jakt M."/>
            <person name="Kanapin A."/>
            <person name="Katoh M."/>
            <person name="Kawasawa Y."/>
            <person name="Kelso J."/>
            <person name="Kitamura H."/>
            <person name="Kitano H."/>
            <person name="Kollias G."/>
            <person name="Krishnan S.P."/>
            <person name="Kruger A."/>
            <person name="Kummerfeld S.K."/>
            <person name="Kurochkin I.V."/>
            <person name="Lareau L.F."/>
            <person name="Lazarevic D."/>
            <person name="Lipovich L."/>
            <person name="Liu J."/>
            <person name="Liuni S."/>
            <person name="McWilliam S."/>
            <person name="Madan Babu M."/>
            <person name="Madera M."/>
            <person name="Marchionni L."/>
            <person name="Matsuda H."/>
            <person name="Matsuzawa S."/>
            <person name="Miki H."/>
            <person name="Mignone F."/>
            <person name="Miyake S."/>
            <person name="Morris K."/>
            <person name="Mottagui-Tabar S."/>
            <person name="Mulder N."/>
            <person name="Nakano N."/>
            <person name="Nakauchi H."/>
            <person name="Ng P."/>
            <person name="Nilsson R."/>
            <person name="Nishiguchi S."/>
            <person name="Nishikawa S."/>
            <person name="Nori F."/>
            <person name="Ohara O."/>
            <person name="Okazaki Y."/>
            <person name="Orlando V."/>
            <person name="Pang K.C."/>
            <person name="Pavan W.J."/>
            <person name="Pavesi G."/>
            <person name="Pesole G."/>
            <person name="Petrovsky N."/>
            <person name="Piazza S."/>
            <person name="Reed J."/>
            <person name="Reid J.F."/>
            <person name="Ring B.Z."/>
            <person name="Ringwald M."/>
            <person name="Rost B."/>
            <person name="Ruan Y."/>
            <person name="Salzberg S.L."/>
            <person name="Sandelin A."/>
            <person name="Schneider C."/>
            <person name="Schoenbach C."/>
            <person name="Sekiguchi K."/>
            <person name="Semple C.A."/>
            <person name="Seno S."/>
            <person name="Sessa L."/>
            <person name="Sheng Y."/>
            <person name="Shibata Y."/>
            <person name="Shimada H."/>
            <person name="Shimada K."/>
            <person name="Silva D."/>
            <person name="Sinclair B."/>
            <person name="Sperling S."/>
            <person name="Stupka E."/>
            <person name="Sugiura K."/>
            <person name="Sultana R."/>
            <person name="Takenaka Y."/>
            <person name="Taki K."/>
            <person name="Tammoja K."/>
            <person name="Tan S.L."/>
            <person name="Tang S."/>
            <person name="Taylor M.S."/>
            <person name="Tegner J."/>
            <person name="Teichmann S.A."/>
            <person name="Ueda H.R."/>
            <person name="van Nimwegen E."/>
            <person name="Verardo R."/>
            <person name="Wei C.L."/>
            <person name="Yagi K."/>
            <person name="Yamanishi H."/>
            <person name="Zabarovsky E."/>
            <person name="Zhu S."/>
            <person name="Zimmer A."/>
            <person name="Hide W."/>
            <person name="Bult C."/>
            <person name="Grimmond S.M."/>
            <person name="Teasdale R.D."/>
            <person name="Liu E.T."/>
            <person name="Brusic V."/>
            <person name="Quackenbush J."/>
            <person name="Wahlestedt C."/>
            <person name="Mattick J.S."/>
            <person name="Hume D.A."/>
            <person name="Kai C."/>
            <person name="Sasaki D."/>
            <person name="Tomaru Y."/>
            <person name="Fukuda S."/>
            <person name="Kanamori-Katayama M."/>
            <person name="Suzuki M."/>
            <person name="Aoki J."/>
            <person name="Arakawa T."/>
            <person name="Iida J."/>
            <person name="Imamura K."/>
            <person name="Itoh M."/>
            <person name="Kato T."/>
            <person name="Kawaji H."/>
            <person name="Kawagashira N."/>
            <person name="Kawashima T."/>
            <person name="Kojima M."/>
            <person name="Kondo S."/>
            <person name="Konno H."/>
            <person name="Nakano K."/>
            <person name="Ninomiya N."/>
            <person name="Nishio T."/>
            <person name="Okada M."/>
            <person name="Plessy C."/>
            <person name="Shibata K."/>
            <person name="Shiraki T."/>
            <person name="Suzuki S."/>
            <person name="Tagami M."/>
            <person name="Waki K."/>
            <person name="Watahiki A."/>
            <person name="Okamura-Oho Y."/>
            <person name="Suzuki H."/>
            <person name="Kawai J."/>
            <person name="Hayashizaki Y."/>
        </authorList>
    </citation>
    <scope>NUCLEOTIDE SEQUENCE [LARGE SCALE MRNA] (ISOFORM 3)</scope>
    <source>
        <strain>C57BL/6J</strain>
        <tissue>Skin</tissue>
    </source>
</reference>
<reference key="5">
    <citation type="journal article" date="2002" name="DNA Res.">
        <title>Prediction of the coding sequences of mouse homologues of KIAA gene: I. The complete nucleotide sequences of 100 mouse KIAA-homologous cDNAs identified by screening of terminal sequences of cDNA clones randomly sampled from size-fractionated libraries.</title>
        <authorList>
            <person name="Okazaki N."/>
            <person name="Kikuno R."/>
            <person name="Ohara R."/>
            <person name="Inamoto S."/>
            <person name="Hara Y."/>
            <person name="Nagase T."/>
            <person name="Ohara O."/>
            <person name="Koga H."/>
        </authorList>
    </citation>
    <scope>NUCLEOTIDE SEQUENCE [LARGE SCALE MRNA] OF 5-1252</scope>
    <source>
        <tissue>Brain</tissue>
    </source>
</reference>
<reference key="6">
    <citation type="journal article" date="2007" name="Proc. Natl. Acad. Sci. U.S.A.">
        <title>Large-scale phosphorylation analysis of mouse liver.</title>
        <authorList>
            <person name="Villen J."/>
            <person name="Beausoleil S.A."/>
            <person name="Gerber S.A."/>
            <person name="Gygi S.P."/>
        </authorList>
    </citation>
    <scope>PHOSPHORYLATION [LARGE SCALE ANALYSIS] AT THR-85; SER-90; SER-736 AND SER-738</scope>
    <scope>IDENTIFICATION BY MASS SPECTROMETRY [LARGE SCALE ANALYSIS]</scope>
    <source>
        <tissue>Liver</tissue>
    </source>
</reference>
<reference key="7">
    <citation type="journal article" date="2009" name="Immunity">
        <title>The phagosomal proteome in interferon-gamma-activated macrophages.</title>
        <authorList>
            <person name="Trost M."/>
            <person name="English L."/>
            <person name="Lemieux S."/>
            <person name="Courcelles M."/>
            <person name="Desjardins M."/>
            <person name="Thibault P."/>
        </authorList>
    </citation>
    <scope>PHOSPHORYLATION [LARGE SCALE ANALYSIS] AT SER-90</scope>
    <scope>IDENTIFICATION BY MASS SPECTROMETRY [LARGE SCALE ANALYSIS]</scope>
</reference>
<reference key="8">
    <citation type="journal article" date="2010" name="Cell">
        <title>A tissue-specific atlas of mouse protein phosphorylation and expression.</title>
        <authorList>
            <person name="Huttlin E.L."/>
            <person name="Jedrychowski M.P."/>
            <person name="Elias J.E."/>
            <person name="Goswami T."/>
            <person name="Rad R."/>
            <person name="Beausoleil S.A."/>
            <person name="Villen J."/>
            <person name="Haas W."/>
            <person name="Sowa M.E."/>
            <person name="Gygi S.P."/>
        </authorList>
    </citation>
    <scope>PHOSPHORYLATION [LARGE SCALE ANALYSIS] AT SER-90; SER-109; SER-268; SER-465; SER-667; SER-736; SER-738; SER-745; SER-866; SER-1036; SER-1051; SER-1056; SER-1059 AND SER-1154</scope>
    <scope>IDENTIFICATION BY MASS SPECTROMETRY [LARGE SCALE ANALYSIS]</scope>
    <source>
        <tissue>Brain</tissue>
        <tissue>Brown adipose tissue</tissue>
        <tissue>Heart</tissue>
        <tissue>Kidney</tissue>
        <tissue>Liver</tissue>
        <tissue>Lung</tissue>
        <tissue>Pancreas</tissue>
        <tissue>Spleen</tissue>
        <tissue>Testis</tissue>
    </source>
</reference>
<evidence type="ECO:0000250" key="1"/>
<evidence type="ECO:0000250" key="2">
    <source>
        <dbReference type="UniProtKB" id="P28290"/>
    </source>
</evidence>
<evidence type="ECO:0000255" key="3"/>
<evidence type="ECO:0000256" key="4">
    <source>
        <dbReference type="SAM" id="MobiDB-lite"/>
    </source>
</evidence>
<evidence type="ECO:0000269" key="5">
    <source>
    </source>
</evidence>
<evidence type="ECO:0000303" key="6">
    <source>
    </source>
</evidence>
<evidence type="ECO:0000303" key="7">
    <source>
    </source>
</evidence>
<evidence type="ECO:0000303" key="8">
    <source>
    </source>
</evidence>
<evidence type="ECO:0000305" key="9"/>
<evidence type="ECO:0000312" key="10">
    <source>
        <dbReference type="MGI" id="MGI:1917849"/>
    </source>
</evidence>
<evidence type="ECO:0007744" key="11">
    <source>
    </source>
</evidence>
<evidence type="ECO:0007744" key="12">
    <source>
    </source>
</evidence>
<evidence type="ECO:0007744" key="13">
    <source>
    </source>
</evidence>